<keyword id="KW-0238">DNA-binding</keyword>
<keyword id="KW-0804">Transcription</keyword>
<keyword id="KW-0805">Transcription regulation</keyword>
<sequence length="157" mass="17529">MEKFPMTPRGFEKLKEELRWRQQSERPRIIEAIAEARAHGDLSENAEYHAAKEAQSLNEGRINELEDLVARAEVIDVSKLTGDRIKFGATVTMIDEDTEEEKIYQIVGDQEADVKEGRISISSPIARALIGKGEGDTIEVNAPGGSRSYEIIALKFV</sequence>
<accession>B2S6W5</accession>
<protein>
    <recommendedName>
        <fullName evidence="1">Transcription elongation factor GreA</fullName>
    </recommendedName>
    <alternativeName>
        <fullName evidence="1">Transcript cleavage factor GreA</fullName>
    </alternativeName>
</protein>
<organism>
    <name type="scientific">Brucella abortus (strain S19)</name>
    <dbReference type="NCBI Taxonomy" id="430066"/>
    <lineage>
        <taxon>Bacteria</taxon>
        <taxon>Pseudomonadati</taxon>
        <taxon>Pseudomonadota</taxon>
        <taxon>Alphaproteobacteria</taxon>
        <taxon>Hyphomicrobiales</taxon>
        <taxon>Brucellaceae</taxon>
        <taxon>Brucella/Ochrobactrum group</taxon>
        <taxon>Brucella</taxon>
    </lineage>
</organism>
<gene>
    <name evidence="1" type="primary">greA</name>
    <name type="ordered locus">BAbS19_I14190</name>
</gene>
<comment type="function">
    <text evidence="1">Necessary for efficient RNA polymerase transcription elongation past template-encoded arresting sites. The arresting sites in DNA have the property of trapping a certain fraction of elongating RNA polymerases that pass through, resulting in locked ternary complexes. Cleavage of the nascent transcript by cleavage factors such as GreA or GreB allows the resumption of elongation from the new 3'terminus. GreA releases sequences of 2 to 3 nucleotides.</text>
</comment>
<comment type="similarity">
    <text evidence="1">Belongs to the GreA/GreB family.</text>
</comment>
<feature type="chain" id="PRO_1000094151" description="Transcription elongation factor GreA">
    <location>
        <begin position="1"/>
        <end position="157"/>
    </location>
</feature>
<proteinExistence type="inferred from homology"/>
<dbReference type="EMBL" id="CP000887">
    <property type="protein sequence ID" value="ACD72912.1"/>
    <property type="molecule type" value="Genomic_DNA"/>
</dbReference>
<dbReference type="RefSeq" id="WP_002964610.1">
    <property type="nucleotide sequence ID" value="NC_010742.1"/>
</dbReference>
<dbReference type="SMR" id="B2S6W5"/>
<dbReference type="GeneID" id="93016210"/>
<dbReference type="KEGG" id="bmc:BAbS19_I14190"/>
<dbReference type="HOGENOM" id="CLU_101379_2_0_5"/>
<dbReference type="Proteomes" id="UP000002565">
    <property type="component" value="Chromosome 1"/>
</dbReference>
<dbReference type="GO" id="GO:0003677">
    <property type="term" value="F:DNA binding"/>
    <property type="evidence" value="ECO:0007669"/>
    <property type="project" value="UniProtKB-UniRule"/>
</dbReference>
<dbReference type="GO" id="GO:0070063">
    <property type="term" value="F:RNA polymerase binding"/>
    <property type="evidence" value="ECO:0007669"/>
    <property type="project" value="InterPro"/>
</dbReference>
<dbReference type="GO" id="GO:0006354">
    <property type="term" value="P:DNA-templated transcription elongation"/>
    <property type="evidence" value="ECO:0007669"/>
    <property type="project" value="TreeGrafter"/>
</dbReference>
<dbReference type="GO" id="GO:0032784">
    <property type="term" value="P:regulation of DNA-templated transcription elongation"/>
    <property type="evidence" value="ECO:0007669"/>
    <property type="project" value="UniProtKB-UniRule"/>
</dbReference>
<dbReference type="FunFam" id="1.10.287.180:FF:000001">
    <property type="entry name" value="Transcription elongation factor GreA"/>
    <property type="match status" value="1"/>
</dbReference>
<dbReference type="FunFam" id="3.10.50.30:FF:000001">
    <property type="entry name" value="Transcription elongation factor GreA"/>
    <property type="match status" value="1"/>
</dbReference>
<dbReference type="Gene3D" id="3.10.50.30">
    <property type="entry name" value="Transcription elongation factor, GreA/GreB, C-terminal domain"/>
    <property type="match status" value="1"/>
</dbReference>
<dbReference type="Gene3D" id="1.10.287.180">
    <property type="entry name" value="Transcription elongation factor, GreA/GreB, N-terminal domain"/>
    <property type="match status" value="1"/>
</dbReference>
<dbReference type="HAMAP" id="MF_00105">
    <property type="entry name" value="GreA_GreB"/>
    <property type="match status" value="1"/>
</dbReference>
<dbReference type="InterPro" id="IPR036953">
    <property type="entry name" value="GreA/GreB_C_sf"/>
</dbReference>
<dbReference type="InterPro" id="IPR018151">
    <property type="entry name" value="TF_GreA/GreB_CS"/>
</dbReference>
<dbReference type="InterPro" id="IPR006359">
    <property type="entry name" value="Tscrpt_elong_fac_GreA"/>
</dbReference>
<dbReference type="InterPro" id="IPR028624">
    <property type="entry name" value="Tscrpt_elong_fac_GreA/B"/>
</dbReference>
<dbReference type="InterPro" id="IPR001437">
    <property type="entry name" value="Tscrpt_elong_fac_GreA/B_C"/>
</dbReference>
<dbReference type="InterPro" id="IPR023459">
    <property type="entry name" value="Tscrpt_elong_fac_GreA/B_fam"/>
</dbReference>
<dbReference type="InterPro" id="IPR022691">
    <property type="entry name" value="Tscrpt_elong_fac_GreA/B_N"/>
</dbReference>
<dbReference type="InterPro" id="IPR036805">
    <property type="entry name" value="Tscrpt_elong_fac_GreA/B_N_sf"/>
</dbReference>
<dbReference type="NCBIfam" id="TIGR01462">
    <property type="entry name" value="greA"/>
    <property type="match status" value="1"/>
</dbReference>
<dbReference type="NCBIfam" id="NF001261">
    <property type="entry name" value="PRK00226.1-2"/>
    <property type="match status" value="1"/>
</dbReference>
<dbReference type="NCBIfam" id="NF001263">
    <property type="entry name" value="PRK00226.1-4"/>
    <property type="match status" value="1"/>
</dbReference>
<dbReference type="NCBIfam" id="NF001264">
    <property type="entry name" value="PRK00226.1-5"/>
    <property type="match status" value="1"/>
</dbReference>
<dbReference type="PANTHER" id="PTHR30437">
    <property type="entry name" value="TRANSCRIPTION ELONGATION FACTOR GREA"/>
    <property type="match status" value="1"/>
</dbReference>
<dbReference type="PANTHER" id="PTHR30437:SF4">
    <property type="entry name" value="TRANSCRIPTION ELONGATION FACTOR GREA"/>
    <property type="match status" value="1"/>
</dbReference>
<dbReference type="Pfam" id="PF01272">
    <property type="entry name" value="GreA_GreB"/>
    <property type="match status" value="1"/>
</dbReference>
<dbReference type="Pfam" id="PF03449">
    <property type="entry name" value="GreA_GreB_N"/>
    <property type="match status" value="1"/>
</dbReference>
<dbReference type="PIRSF" id="PIRSF006092">
    <property type="entry name" value="GreA_GreB"/>
    <property type="match status" value="1"/>
</dbReference>
<dbReference type="SUPFAM" id="SSF54534">
    <property type="entry name" value="FKBP-like"/>
    <property type="match status" value="1"/>
</dbReference>
<dbReference type="SUPFAM" id="SSF46557">
    <property type="entry name" value="GreA transcript cleavage protein, N-terminal domain"/>
    <property type="match status" value="1"/>
</dbReference>
<dbReference type="PROSITE" id="PS00829">
    <property type="entry name" value="GREAB_1"/>
    <property type="match status" value="1"/>
</dbReference>
<dbReference type="PROSITE" id="PS00830">
    <property type="entry name" value="GREAB_2"/>
    <property type="match status" value="1"/>
</dbReference>
<reference key="1">
    <citation type="journal article" date="2008" name="PLoS ONE">
        <title>Genome sequence of Brucella abortus vaccine strain S19 compared to virulent strains yields candidate virulence genes.</title>
        <authorList>
            <person name="Crasta O.R."/>
            <person name="Folkerts O."/>
            <person name="Fei Z."/>
            <person name="Mane S.P."/>
            <person name="Evans C."/>
            <person name="Martino-Catt S."/>
            <person name="Bricker B."/>
            <person name="Yu G."/>
            <person name="Du L."/>
            <person name="Sobral B.W."/>
        </authorList>
    </citation>
    <scope>NUCLEOTIDE SEQUENCE [LARGE SCALE GENOMIC DNA]</scope>
    <source>
        <strain>S19</strain>
    </source>
</reference>
<name>GREA_BRUA1</name>
<evidence type="ECO:0000255" key="1">
    <source>
        <dbReference type="HAMAP-Rule" id="MF_00105"/>
    </source>
</evidence>